<reference key="1">
    <citation type="journal article" date="2001" name="Proc. Natl. Acad. Sci. U.S.A.">
        <title>Complete genome sequence of an M1 strain of Streptococcus pyogenes.</title>
        <authorList>
            <person name="Ferretti J.J."/>
            <person name="McShan W.M."/>
            <person name="Ajdic D.J."/>
            <person name="Savic D.J."/>
            <person name="Savic G."/>
            <person name="Lyon K."/>
            <person name="Primeaux C."/>
            <person name="Sezate S."/>
            <person name="Suvorov A.N."/>
            <person name="Kenton S."/>
            <person name="Lai H.S."/>
            <person name="Lin S.P."/>
            <person name="Qian Y."/>
            <person name="Jia H.G."/>
            <person name="Najar F.Z."/>
            <person name="Ren Q."/>
            <person name="Zhu H."/>
            <person name="Song L."/>
            <person name="White J."/>
            <person name="Yuan X."/>
            <person name="Clifton S.W."/>
            <person name="Roe B.A."/>
            <person name="McLaughlin R.E."/>
        </authorList>
    </citation>
    <scope>NUCLEOTIDE SEQUENCE [LARGE SCALE GENOMIC DNA]</scope>
    <source>
        <strain>ATCC 700294 / SF370 / Serotype M1</strain>
    </source>
</reference>
<reference key="2">
    <citation type="journal article" date="2005" name="J. Infect. Dis.">
        <title>Evolutionary origin and emergence of a highly successful clone of serotype M1 group A Streptococcus involved multiple horizontal gene transfer events.</title>
        <authorList>
            <person name="Sumby P."/>
            <person name="Porcella S.F."/>
            <person name="Madrigal A.G."/>
            <person name="Barbian K.D."/>
            <person name="Virtaneva K."/>
            <person name="Ricklefs S.M."/>
            <person name="Sturdevant D.E."/>
            <person name="Graham M.R."/>
            <person name="Vuopio-Varkila J."/>
            <person name="Hoe N.P."/>
            <person name="Musser J.M."/>
        </authorList>
    </citation>
    <scope>NUCLEOTIDE SEQUENCE [LARGE SCALE GENOMIC DNA]</scope>
    <source>
        <strain>ATCC BAA-947 / MGAS5005 / Serotype M1</strain>
    </source>
</reference>
<name>RSMA_STRP1</name>
<sequence>MRIADYSVTKAVLDRHGFTFKKSFGQNFLTDTNILQKIVDTAEIDQNVNVIEIGPGIGALTEFLAENAAEVMAFEIDDRLVPILADTLRDFDNVQVVNQDILKADLQTQIKQFKNPDLPIKVVANLPYYITTPILMHLIESKIPFQEFVVMMQREVADRISAEPNTKAYGSLSIAVQYYMTAKVAFIVPRTVFVPAPNVDSAILKMVRRDQPLIEVKDEDFFFRVSRLSFVHRRKTLWNNLTSHFGKSEDIKAKLEKGLALADIKPSIRGEALSIQDFGKLADALKEVGL</sequence>
<organism>
    <name type="scientific">Streptococcus pyogenes serotype M1</name>
    <dbReference type="NCBI Taxonomy" id="301447"/>
    <lineage>
        <taxon>Bacteria</taxon>
        <taxon>Bacillati</taxon>
        <taxon>Bacillota</taxon>
        <taxon>Bacilli</taxon>
        <taxon>Lactobacillales</taxon>
        <taxon>Streptococcaceae</taxon>
        <taxon>Streptococcus</taxon>
    </lineage>
</organism>
<comment type="function">
    <text evidence="1">Specifically dimethylates two adjacent adenosines (A1518 and A1519) in the loop of a conserved hairpin near the 3'-end of 16S rRNA in the 30S particle. May play a critical role in biogenesis of 30S subunits.</text>
</comment>
<comment type="catalytic activity">
    <reaction evidence="1">
        <text>adenosine(1518)/adenosine(1519) in 16S rRNA + 4 S-adenosyl-L-methionine = N(6)-dimethyladenosine(1518)/N(6)-dimethyladenosine(1519) in 16S rRNA + 4 S-adenosyl-L-homocysteine + 4 H(+)</text>
        <dbReference type="Rhea" id="RHEA:19609"/>
        <dbReference type="Rhea" id="RHEA-COMP:10232"/>
        <dbReference type="Rhea" id="RHEA-COMP:10233"/>
        <dbReference type="ChEBI" id="CHEBI:15378"/>
        <dbReference type="ChEBI" id="CHEBI:57856"/>
        <dbReference type="ChEBI" id="CHEBI:59789"/>
        <dbReference type="ChEBI" id="CHEBI:74411"/>
        <dbReference type="ChEBI" id="CHEBI:74493"/>
        <dbReference type="EC" id="2.1.1.182"/>
    </reaction>
</comment>
<comment type="subcellular location">
    <subcellularLocation>
        <location evidence="1">Cytoplasm</location>
    </subcellularLocation>
</comment>
<comment type="similarity">
    <text evidence="1">Belongs to the class I-like SAM-binding methyltransferase superfamily. rRNA adenine N(6)-methyltransferase family. RsmA subfamily.</text>
</comment>
<gene>
    <name evidence="1" type="primary">rsmA</name>
    <name evidence="1" type="synonym">ksgA</name>
    <name type="ordered locus">SPy_0262</name>
    <name type="ordered locus">M5005_Spy0222</name>
</gene>
<protein>
    <recommendedName>
        <fullName evidence="1">Ribosomal RNA small subunit methyltransferase A</fullName>
        <ecNumber evidence="1">2.1.1.182</ecNumber>
    </recommendedName>
    <alternativeName>
        <fullName evidence="1">16S rRNA (adenine(1518)-N(6)/adenine(1519)-N(6))-dimethyltransferase</fullName>
    </alternativeName>
    <alternativeName>
        <fullName evidence="1">16S rRNA dimethyladenosine transferase</fullName>
    </alternativeName>
    <alternativeName>
        <fullName evidence="1">16S rRNA dimethylase</fullName>
    </alternativeName>
    <alternativeName>
        <fullName evidence="1">S-adenosylmethionine-6-N', N'-adenosyl(rRNA) dimethyltransferase</fullName>
    </alternativeName>
</protein>
<proteinExistence type="inferred from homology"/>
<keyword id="KW-0963">Cytoplasm</keyword>
<keyword id="KW-0489">Methyltransferase</keyword>
<keyword id="KW-1185">Reference proteome</keyword>
<keyword id="KW-0694">RNA-binding</keyword>
<keyword id="KW-0698">rRNA processing</keyword>
<keyword id="KW-0949">S-adenosyl-L-methionine</keyword>
<keyword id="KW-0808">Transferase</keyword>
<accession>Q9A1I0</accession>
<accession>Q490X7</accession>
<feature type="chain" id="PRO_0000101618" description="Ribosomal RNA small subunit methyltransferase A">
    <location>
        <begin position="1"/>
        <end position="290"/>
    </location>
</feature>
<feature type="binding site" evidence="1">
    <location>
        <position position="27"/>
    </location>
    <ligand>
        <name>S-adenosyl-L-methionine</name>
        <dbReference type="ChEBI" id="CHEBI:59789"/>
    </ligand>
</feature>
<feature type="binding site" evidence="1">
    <location>
        <position position="29"/>
    </location>
    <ligand>
        <name>S-adenosyl-L-methionine</name>
        <dbReference type="ChEBI" id="CHEBI:59789"/>
    </ligand>
</feature>
<feature type="binding site" evidence="1">
    <location>
        <position position="54"/>
    </location>
    <ligand>
        <name>S-adenosyl-L-methionine</name>
        <dbReference type="ChEBI" id="CHEBI:59789"/>
    </ligand>
</feature>
<feature type="binding site" evidence="1">
    <location>
        <position position="75"/>
    </location>
    <ligand>
        <name>S-adenosyl-L-methionine</name>
        <dbReference type="ChEBI" id="CHEBI:59789"/>
    </ligand>
</feature>
<feature type="binding site" evidence="1">
    <location>
        <position position="100"/>
    </location>
    <ligand>
        <name>S-adenosyl-L-methionine</name>
        <dbReference type="ChEBI" id="CHEBI:59789"/>
    </ligand>
</feature>
<feature type="binding site" evidence="1">
    <location>
        <position position="125"/>
    </location>
    <ligand>
        <name>S-adenosyl-L-methionine</name>
        <dbReference type="ChEBI" id="CHEBI:59789"/>
    </ligand>
</feature>
<evidence type="ECO:0000255" key="1">
    <source>
        <dbReference type="HAMAP-Rule" id="MF_00607"/>
    </source>
</evidence>
<dbReference type="EC" id="2.1.1.182" evidence="1"/>
<dbReference type="EMBL" id="AE004092">
    <property type="protein sequence ID" value="AAK33337.1"/>
    <property type="molecule type" value="Genomic_DNA"/>
</dbReference>
<dbReference type="EMBL" id="CP000017">
    <property type="protein sequence ID" value="AAZ50841.1"/>
    <property type="molecule type" value="Genomic_DNA"/>
</dbReference>
<dbReference type="RefSeq" id="NP_268616.1">
    <property type="nucleotide sequence ID" value="NC_002737.2"/>
</dbReference>
<dbReference type="SMR" id="Q9A1I0"/>
<dbReference type="PaxDb" id="1314-HKU360_00262"/>
<dbReference type="KEGG" id="spy:SPy_0262"/>
<dbReference type="KEGG" id="spz:M5005_Spy0222"/>
<dbReference type="PATRIC" id="fig|160490.10.peg.230"/>
<dbReference type="HOGENOM" id="CLU_041220_0_0_9"/>
<dbReference type="OMA" id="GMFQKEV"/>
<dbReference type="Proteomes" id="UP000000750">
    <property type="component" value="Chromosome"/>
</dbReference>
<dbReference type="GO" id="GO:0005829">
    <property type="term" value="C:cytosol"/>
    <property type="evidence" value="ECO:0007669"/>
    <property type="project" value="TreeGrafter"/>
</dbReference>
<dbReference type="GO" id="GO:0052908">
    <property type="term" value="F:16S rRNA (adenine(1518)-N(6)/adenine(1519)-N(6))-dimethyltransferase activity"/>
    <property type="evidence" value="ECO:0007669"/>
    <property type="project" value="UniProtKB-EC"/>
</dbReference>
<dbReference type="GO" id="GO:0003723">
    <property type="term" value="F:RNA binding"/>
    <property type="evidence" value="ECO:0007669"/>
    <property type="project" value="UniProtKB-KW"/>
</dbReference>
<dbReference type="CDD" id="cd02440">
    <property type="entry name" value="AdoMet_MTases"/>
    <property type="match status" value="1"/>
</dbReference>
<dbReference type="FunFam" id="3.40.50.150:FF:000023">
    <property type="entry name" value="Ribosomal RNA small subunit methyltransferase A"/>
    <property type="match status" value="1"/>
</dbReference>
<dbReference type="Gene3D" id="1.10.8.100">
    <property type="entry name" value="Ribosomal RNA adenine dimethylase-like, domain 2"/>
    <property type="match status" value="1"/>
</dbReference>
<dbReference type="Gene3D" id="3.40.50.150">
    <property type="entry name" value="Vaccinia Virus protein VP39"/>
    <property type="match status" value="1"/>
</dbReference>
<dbReference type="HAMAP" id="MF_00607">
    <property type="entry name" value="16SrRNA_methyltr_A"/>
    <property type="match status" value="1"/>
</dbReference>
<dbReference type="InterPro" id="IPR001737">
    <property type="entry name" value="KsgA/Erm"/>
</dbReference>
<dbReference type="InterPro" id="IPR023165">
    <property type="entry name" value="rRNA_Ade_diMease-like_C"/>
</dbReference>
<dbReference type="InterPro" id="IPR020596">
    <property type="entry name" value="rRNA_Ade_Mease_Trfase_CS"/>
</dbReference>
<dbReference type="InterPro" id="IPR020598">
    <property type="entry name" value="rRNA_Ade_methylase_Trfase_N"/>
</dbReference>
<dbReference type="InterPro" id="IPR011530">
    <property type="entry name" value="rRNA_adenine_dimethylase"/>
</dbReference>
<dbReference type="InterPro" id="IPR029063">
    <property type="entry name" value="SAM-dependent_MTases_sf"/>
</dbReference>
<dbReference type="NCBIfam" id="TIGR00755">
    <property type="entry name" value="ksgA"/>
    <property type="match status" value="1"/>
</dbReference>
<dbReference type="PANTHER" id="PTHR11727">
    <property type="entry name" value="DIMETHYLADENOSINE TRANSFERASE"/>
    <property type="match status" value="1"/>
</dbReference>
<dbReference type="PANTHER" id="PTHR11727:SF7">
    <property type="entry name" value="DIMETHYLADENOSINE TRANSFERASE-RELATED"/>
    <property type="match status" value="1"/>
</dbReference>
<dbReference type="Pfam" id="PF00398">
    <property type="entry name" value="RrnaAD"/>
    <property type="match status" value="1"/>
</dbReference>
<dbReference type="SMART" id="SM00650">
    <property type="entry name" value="rADc"/>
    <property type="match status" value="1"/>
</dbReference>
<dbReference type="SUPFAM" id="SSF53335">
    <property type="entry name" value="S-adenosyl-L-methionine-dependent methyltransferases"/>
    <property type="match status" value="1"/>
</dbReference>
<dbReference type="PROSITE" id="PS01131">
    <property type="entry name" value="RRNA_A_DIMETH"/>
    <property type="match status" value="1"/>
</dbReference>
<dbReference type="PROSITE" id="PS51689">
    <property type="entry name" value="SAM_RNA_A_N6_MT"/>
    <property type="match status" value="1"/>
</dbReference>